<accession>P50311</accession>
<comment type="catalytic activity">
    <reaction evidence="2">
        <text>(2R)-3-phosphoglycerate + ATP = (2R)-3-phospho-glyceroyl phosphate + ADP</text>
        <dbReference type="Rhea" id="RHEA:14801"/>
        <dbReference type="ChEBI" id="CHEBI:30616"/>
        <dbReference type="ChEBI" id="CHEBI:57604"/>
        <dbReference type="ChEBI" id="CHEBI:58272"/>
        <dbReference type="ChEBI" id="CHEBI:456216"/>
        <dbReference type="EC" id="2.7.2.3"/>
    </reaction>
</comment>
<comment type="cofactor">
    <cofactor evidence="2">
        <name>Mg(2+)</name>
        <dbReference type="ChEBI" id="CHEBI:18420"/>
    </cofactor>
</comment>
<comment type="pathway">
    <text>Carbohydrate degradation; glycolysis; pyruvate from D-glyceraldehyde 3-phosphate: step 2/5.</text>
</comment>
<comment type="subunit">
    <text evidence="1">Monomer.</text>
</comment>
<comment type="subcellular location">
    <subcellularLocation>
        <location evidence="4">Cytoplasm</location>
    </subcellularLocation>
</comment>
<comment type="similarity">
    <text evidence="4">Belongs to the phosphoglycerate kinase family.</text>
</comment>
<keyword id="KW-0067">ATP-binding</keyword>
<keyword id="KW-0963">Cytoplasm</keyword>
<keyword id="KW-0324">Glycolysis</keyword>
<keyword id="KW-0418">Kinase</keyword>
<keyword id="KW-0460">Magnesium</keyword>
<keyword id="KW-0479">Metal-binding</keyword>
<keyword id="KW-0547">Nucleotide-binding</keyword>
<keyword id="KW-0808">Transferase</keyword>
<reference key="1">
    <citation type="submission" date="1999-01" db="EMBL/GenBank/DDBJ databases">
        <authorList>
            <person name="Hong S.J."/>
        </authorList>
    </citation>
    <scope>NUCLEOTIDE SEQUENCE [MRNA]</scope>
</reference>
<gene>
    <name type="primary">PGK</name>
</gene>
<dbReference type="EC" id="2.7.2.3" evidence="2"/>
<dbReference type="EMBL" id="L47982">
    <property type="protein sequence ID" value="AAD10200.1"/>
    <property type="molecule type" value="mRNA"/>
</dbReference>
<dbReference type="SMR" id="P50311"/>
<dbReference type="UniPathway" id="UPA00109">
    <property type="reaction ID" value="UER00185"/>
</dbReference>
<dbReference type="GO" id="GO:0005829">
    <property type="term" value="C:cytosol"/>
    <property type="evidence" value="ECO:0007669"/>
    <property type="project" value="TreeGrafter"/>
</dbReference>
<dbReference type="GO" id="GO:0043531">
    <property type="term" value="F:ADP binding"/>
    <property type="evidence" value="ECO:0007669"/>
    <property type="project" value="TreeGrafter"/>
</dbReference>
<dbReference type="GO" id="GO:0005524">
    <property type="term" value="F:ATP binding"/>
    <property type="evidence" value="ECO:0000250"/>
    <property type="project" value="UniProtKB"/>
</dbReference>
<dbReference type="GO" id="GO:0046872">
    <property type="term" value="F:metal ion binding"/>
    <property type="evidence" value="ECO:0007669"/>
    <property type="project" value="UniProtKB-KW"/>
</dbReference>
<dbReference type="GO" id="GO:0004618">
    <property type="term" value="F:phosphoglycerate kinase activity"/>
    <property type="evidence" value="ECO:0000250"/>
    <property type="project" value="UniProtKB"/>
</dbReference>
<dbReference type="GO" id="GO:0006094">
    <property type="term" value="P:gluconeogenesis"/>
    <property type="evidence" value="ECO:0007669"/>
    <property type="project" value="TreeGrafter"/>
</dbReference>
<dbReference type="GO" id="GO:0006096">
    <property type="term" value="P:glycolytic process"/>
    <property type="evidence" value="ECO:0007669"/>
    <property type="project" value="UniProtKB-UniPathway"/>
</dbReference>
<dbReference type="CDD" id="cd00318">
    <property type="entry name" value="Phosphoglycerate_kinase"/>
    <property type="match status" value="1"/>
</dbReference>
<dbReference type="FunFam" id="3.40.50.1260:FF:000019">
    <property type="entry name" value="Phosphoglycerate kinase 1"/>
    <property type="match status" value="1"/>
</dbReference>
<dbReference type="FunFam" id="3.40.50.1260:FF:000031">
    <property type="entry name" value="Phosphoglycerate kinase 1"/>
    <property type="match status" value="1"/>
</dbReference>
<dbReference type="Gene3D" id="3.40.50.1260">
    <property type="entry name" value="Phosphoglycerate kinase, N-terminal domain"/>
    <property type="match status" value="3"/>
</dbReference>
<dbReference type="HAMAP" id="MF_00145">
    <property type="entry name" value="Phosphoglyc_kinase"/>
    <property type="match status" value="1"/>
</dbReference>
<dbReference type="InterPro" id="IPR001576">
    <property type="entry name" value="Phosphoglycerate_kinase"/>
</dbReference>
<dbReference type="InterPro" id="IPR015911">
    <property type="entry name" value="Phosphoglycerate_kinase_CS"/>
</dbReference>
<dbReference type="InterPro" id="IPR015824">
    <property type="entry name" value="Phosphoglycerate_kinase_N"/>
</dbReference>
<dbReference type="InterPro" id="IPR036043">
    <property type="entry name" value="Phosphoglycerate_kinase_sf"/>
</dbReference>
<dbReference type="PANTHER" id="PTHR11406">
    <property type="entry name" value="PHOSPHOGLYCERATE KINASE"/>
    <property type="match status" value="1"/>
</dbReference>
<dbReference type="PANTHER" id="PTHR11406:SF0">
    <property type="entry name" value="PHOSPHOGLYCERATE KINASE"/>
    <property type="match status" value="1"/>
</dbReference>
<dbReference type="Pfam" id="PF00162">
    <property type="entry name" value="PGK"/>
    <property type="match status" value="1"/>
</dbReference>
<dbReference type="PIRSF" id="PIRSF000724">
    <property type="entry name" value="Pgk"/>
    <property type="match status" value="1"/>
</dbReference>
<dbReference type="PRINTS" id="PR00477">
    <property type="entry name" value="PHGLYCKINASE"/>
</dbReference>
<dbReference type="SUPFAM" id="SSF53748">
    <property type="entry name" value="Phosphoglycerate kinase"/>
    <property type="match status" value="1"/>
</dbReference>
<dbReference type="PROSITE" id="PS00111">
    <property type="entry name" value="PGLYCERATE_KINASE"/>
    <property type="match status" value="1"/>
</dbReference>
<organism>
    <name type="scientific">Opisthorchis sinensis</name>
    <name type="common">Clonorchis sinensis</name>
    <dbReference type="NCBI Taxonomy" id="41765"/>
    <lineage>
        <taxon>Eukaryota</taxon>
        <taxon>Metazoa</taxon>
        <taxon>Spiralia</taxon>
        <taxon>Lophotrochozoa</taxon>
        <taxon>Platyhelminthes</taxon>
        <taxon>Trematoda</taxon>
        <taxon>Digenea</taxon>
        <taxon>Opisthorchiida</taxon>
        <taxon>Opisthorchiata</taxon>
        <taxon>Opisthorchiidae</taxon>
        <taxon>Opisthorchis</taxon>
    </lineage>
</organism>
<sequence>MGLRKLSIANVDLKDKRVLMRVDFNVPMKDGKVTNTQRIVGASPTIKYALDKGAKSIVLMSHLGGRVGNKVARYSLNPVGEEVSKLLGKPVKFLPDCVGPETTEGMCQSSAGSVFLLENLRFHVEEEGKGVSPTGEKIKATPEQVKAFSENLTKLGDVYLNDAFGTAHRAHASMVGCRLTQRACGFLMDKELTYFSKLLDQPQHPFLAIIGGAKVSDKIQLIKNMLDKVDELIITGGMAFTFLKKLHNMKIGKSLYDEPGAAIVDEWMQLAKSKNVKIHLPVDFITGDKFAEDANTGTATVEPGIRDTHMGLDGGPKTMEEFCKVISRAKTIVWNGPMGVFEMEKFAGGTKAAMDAVVAATTKGVTNNNGGGDTATCCPKWKTEAQVSHVSTGVGASLELLEGKQLPGILALSDA</sequence>
<name>PGK_OPISI</name>
<feature type="chain" id="PRO_0000145845" description="Phosphoglycerate kinase">
    <location>
        <begin position="1"/>
        <end position="415"/>
    </location>
</feature>
<feature type="binding site" evidence="2">
    <location>
        <position position="22"/>
    </location>
    <ligand>
        <name>(2R)-3-phosphoglycerate</name>
        <dbReference type="ChEBI" id="CHEBI:58272"/>
    </ligand>
</feature>
<feature type="binding site" evidence="3">
    <location>
        <position position="23"/>
    </location>
    <ligand>
        <name>(2R)-3-phosphoglycerate</name>
        <dbReference type="ChEBI" id="CHEBI:58272"/>
    </ligand>
</feature>
<feature type="binding site" evidence="2">
    <location>
        <position position="24"/>
    </location>
    <ligand>
        <name>(2R)-3-phosphoglycerate</name>
        <dbReference type="ChEBI" id="CHEBI:58272"/>
    </ligand>
</feature>
<feature type="binding site" evidence="3">
    <location>
        <position position="25"/>
    </location>
    <ligand>
        <name>(2R)-3-phosphoglycerate</name>
        <dbReference type="ChEBI" id="CHEBI:58272"/>
    </ligand>
</feature>
<feature type="binding site" evidence="2">
    <location>
        <position position="37"/>
    </location>
    <ligand>
        <name>(2R)-3-phosphoglycerate</name>
        <dbReference type="ChEBI" id="CHEBI:58272"/>
    </ligand>
</feature>
<feature type="binding site" evidence="3">
    <location>
        <position position="38"/>
    </location>
    <ligand>
        <name>(2R)-3-phosphoglycerate</name>
        <dbReference type="ChEBI" id="CHEBI:58272"/>
    </ligand>
</feature>
<feature type="binding site" evidence="2">
    <location>
        <position position="61"/>
    </location>
    <ligand>
        <name>(2R)-3-phosphoglycerate</name>
        <dbReference type="ChEBI" id="CHEBI:58272"/>
    </ligand>
</feature>
<feature type="binding site" evidence="3">
    <location>
        <position position="62"/>
    </location>
    <ligand>
        <name>(2R)-3-phosphoglycerate</name>
        <dbReference type="ChEBI" id="CHEBI:58272"/>
    </ligand>
</feature>
<feature type="binding site" evidence="2">
    <location>
        <position position="64"/>
    </location>
    <ligand>
        <name>(2R)-3-phosphoglycerate</name>
        <dbReference type="ChEBI" id="CHEBI:58272"/>
    </ligand>
</feature>
<feature type="binding site" evidence="2">
    <location>
        <position position="120"/>
    </location>
    <ligand>
        <name>(2R)-3-phosphoglycerate</name>
        <dbReference type="ChEBI" id="CHEBI:58272"/>
    </ligand>
</feature>
<feature type="binding site" evidence="3">
    <location>
        <position position="121"/>
    </location>
    <ligand>
        <name>(2R)-3-phosphoglycerate</name>
        <dbReference type="ChEBI" id="CHEBI:58272"/>
    </ligand>
</feature>
<feature type="binding site" evidence="2">
    <location>
        <position position="168"/>
    </location>
    <ligand>
        <name>(2R)-3-phosphoglycerate</name>
        <dbReference type="ChEBI" id="CHEBI:58272"/>
    </ligand>
</feature>
<feature type="binding site" evidence="3">
    <location>
        <position position="169"/>
    </location>
    <ligand>
        <name>(2R)-3-phosphoglycerate</name>
        <dbReference type="ChEBI" id="CHEBI:58272"/>
    </ligand>
</feature>
<feature type="binding site" evidence="2">
    <location>
        <position position="212"/>
    </location>
    <ligand>
        <name>ADP</name>
        <dbReference type="ChEBI" id="CHEBI:456216"/>
    </ligand>
</feature>
<feature type="binding site" evidence="2">
    <location>
        <position position="212"/>
    </location>
    <ligand>
        <name>CDP</name>
        <dbReference type="ChEBI" id="CHEBI:58069"/>
    </ligand>
</feature>
<feature type="binding site" evidence="3">
    <location>
        <position position="213"/>
    </location>
    <ligand>
        <name>AMP</name>
        <dbReference type="ChEBI" id="CHEBI:456215"/>
    </ligand>
</feature>
<feature type="binding site" evidence="3">
    <location>
        <position position="213"/>
    </location>
    <ligand>
        <name>ATP</name>
        <dbReference type="ChEBI" id="CHEBI:30616"/>
    </ligand>
</feature>
<feature type="binding site" evidence="2">
    <location>
        <position position="213"/>
    </location>
    <ligand>
        <name>Mg(2+)</name>
        <dbReference type="ChEBI" id="CHEBI:18420"/>
    </ligand>
</feature>
<feature type="binding site" evidence="3">
    <location>
        <position position="214"/>
    </location>
    <ligand>
        <name>AMP</name>
        <dbReference type="ChEBI" id="CHEBI:456215"/>
    </ligand>
</feature>
<feature type="binding site" evidence="2">
    <location>
        <position position="217"/>
    </location>
    <ligand>
        <name>CDP</name>
        <dbReference type="ChEBI" id="CHEBI:58069"/>
    </ligand>
</feature>
<feature type="binding site" evidence="2">
    <location>
        <position position="217"/>
    </location>
    <ligand>
        <name>Mg(2+)</name>
        <dbReference type="ChEBI" id="CHEBI:18420"/>
    </ligand>
</feature>
<feature type="binding site" evidence="3">
    <location>
        <position position="218"/>
    </location>
    <ligand>
        <name>AMP</name>
        <dbReference type="ChEBI" id="CHEBI:456215"/>
    </ligand>
</feature>
<feature type="binding site" evidence="3">
    <location>
        <position position="218"/>
    </location>
    <ligand>
        <name>ATP</name>
        <dbReference type="ChEBI" id="CHEBI:30616"/>
    </ligand>
</feature>
<feature type="binding site" evidence="2">
    <location>
        <position position="236"/>
    </location>
    <ligand>
        <name>ADP</name>
        <dbReference type="ChEBI" id="CHEBI:456216"/>
    </ligand>
</feature>
<feature type="binding site" evidence="2">
    <location>
        <position position="236"/>
    </location>
    <ligand>
        <name>CDP</name>
        <dbReference type="ChEBI" id="CHEBI:58069"/>
    </ligand>
</feature>
<feature type="binding site" evidence="3">
    <location>
        <position position="237"/>
    </location>
    <ligand>
        <name>AMP</name>
        <dbReference type="ChEBI" id="CHEBI:456215"/>
    </ligand>
</feature>
<feature type="binding site" evidence="3">
    <location>
        <position position="237"/>
    </location>
    <ligand>
        <name>ATP</name>
        <dbReference type="ChEBI" id="CHEBI:30616"/>
    </ligand>
</feature>
<feature type="binding site" evidence="3">
    <location>
        <position position="311"/>
    </location>
    <ligand>
        <name>AMP</name>
        <dbReference type="ChEBI" id="CHEBI:456215"/>
    </ligand>
</feature>
<feature type="binding site" evidence="3">
    <location>
        <position position="311"/>
    </location>
    <ligand>
        <name>ATP</name>
        <dbReference type="ChEBI" id="CHEBI:30616"/>
    </ligand>
</feature>
<feature type="binding site" evidence="2">
    <location>
        <position position="336"/>
    </location>
    <ligand>
        <name>CDP</name>
        <dbReference type="ChEBI" id="CHEBI:58069"/>
    </ligand>
</feature>
<feature type="binding site" evidence="2">
    <location>
        <position position="341"/>
    </location>
    <ligand>
        <name>ADP</name>
        <dbReference type="ChEBI" id="CHEBI:456216"/>
    </ligand>
</feature>
<feature type="binding site" evidence="2">
    <location>
        <position position="341"/>
    </location>
    <ligand>
        <name>CDP</name>
        <dbReference type="ChEBI" id="CHEBI:58069"/>
    </ligand>
</feature>
<feature type="binding site" evidence="3">
    <location>
        <position position="342"/>
    </location>
    <ligand>
        <name>AMP</name>
        <dbReference type="ChEBI" id="CHEBI:456215"/>
    </ligand>
</feature>
<feature type="binding site" evidence="3">
    <location>
        <position position="342"/>
    </location>
    <ligand>
        <name>ATP</name>
        <dbReference type="ChEBI" id="CHEBI:30616"/>
    </ligand>
</feature>
<feature type="binding site" evidence="3">
    <location>
        <position position="373"/>
    </location>
    <ligand>
        <name>ATP</name>
        <dbReference type="ChEBI" id="CHEBI:30616"/>
    </ligand>
</feature>
<feature type="binding site" evidence="3">
    <location>
        <position position="373"/>
    </location>
    <ligand>
        <name>Mg(2+)</name>
        <dbReference type="ChEBI" id="CHEBI:18420"/>
    </ligand>
</feature>
<feature type="binding site" evidence="3">
    <location>
        <position position="374"/>
    </location>
    <ligand>
        <name>ATP</name>
        <dbReference type="ChEBI" id="CHEBI:30616"/>
    </ligand>
</feature>
<evidence type="ECO:0000250" key="1"/>
<evidence type="ECO:0000250" key="2">
    <source>
        <dbReference type="UniProtKB" id="P00558"/>
    </source>
</evidence>
<evidence type="ECO:0000250" key="3">
    <source>
        <dbReference type="UniProtKB" id="Q7SIB7"/>
    </source>
</evidence>
<evidence type="ECO:0000305" key="4"/>
<proteinExistence type="evidence at transcript level"/>
<protein>
    <recommendedName>
        <fullName>Phosphoglycerate kinase</fullName>
        <ecNumber evidence="2">2.7.2.3</ecNumber>
    </recommendedName>
</protein>